<feature type="chain" id="PRO_0000089226" description="Macro domain-containing protein XCC3184">
    <location>
        <begin position="1"/>
        <end position="179"/>
    </location>
</feature>
<feature type="domain" description="Macro" evidence="1">
    <location>
        <begin position="1"/>
        <end position="175"/>
    </location>
</feature>
<accession>Q8P5Z8</accession>
<organism>
    <name type="scientific">Xanthomonas campestris pv. campestris (strain ATCC 33913 / DSM 3586 / NCPPB 528 / LMG 568 / P 25)</name>
    <dbReference type="NCBI Taxonomy" id="190485"/>
    <lineage>
        <taxon>Bacteria</taxon>
        <taxon>Pseudomonadati</taxon>
        <taxon>Pseudomonadota</taxon>
        <taxon>Gammaproteobacteria</taxon>
        <taxon>Lysobacterales</taxon>
        <taxon>Lysobacteraceae</taxon>
        <taxon>Xanthomonas</taxon>
    </lineage>
</organism>
<evidence type="ECO:0000255" key="1">
    <source>
        <dbReference type="PROSITE-ProRule" id="PRU00490"/>
    </source>
</evidence>
<evidence type="ECO:0000305" key="2"/>
<name>Y3184_XANCP</name>
<protein>
    <recommendedName>
        <fullName>Macro domain-containing protein XCC3184</fullName>
    </recommendedName>
</protein>
<dbReference type="EMBL" id="AE008922">
    <property type="protein sequence ID" value="AAM42454.1"/>
    <property type="molecule type" value="Genomic_DNA"/>
</dbReference>
<dbReference type="RefSeq" id="NP_638530.1">
    <property type="nucleotide sequence ID" value="NC_003902.1"/>
</dbReference>
<dbReference type="RefSeq" id="WP_011038291.1">
    <property type="nucleotide sequence ID" value="NC_003902.1"/>
</dbReference>
<dbReference type="SMR" id="Q8P5Z8"/>
<dbReference type="STRING" id="190485.XCC3184"/>
<dbReference type="EnsemblBacteria" id="AAM42454">
    <property type="protein sequence ID" value="AAM42454"/>
    <property type="gene ID" value="XCC3184"/>
</dbReference>
<dbReference type="KEGG" id="xcc:XCC3184"/>
<dbReference type="PATRIC" id="fig|190485.4.peg.3401"/>
<dbReference type="eggNOG" id="COG2110">
    <property type="taxonomic scope" value="Bacteria"/>
</dbReference>
<dbReference type="HOGENOM" id="CLU_046550_5_1_6"/>
<dbReference type="OrthoDB" id="6194521at2"/>
<dbReference type="Proteomes" id="UP000001010">
    <property type="component" value="Chromosome"/>
</dbReference>
<dbReference type="GO" id="GO:0061463">
    <property type="term" value="F:O-acetyl-ADP-ribose deacetylase activity"/>
    <property type="evidence" value="ECO:0000318"/>
    <property type="project" value="GO_Central"/>
</dbReference>
<dbReference type="CDD" id="cd02908">
    <property type="entry name" value="Macro_OAADPr_deacetylase"/>
    <property type="match status" value="1"/>
</dbReference>
<dbReference type="Gene3D" id="3.40.220.10">
    <property type="entry name" value="Leucine Aminopeptidase, subunit E, domain 1"/>
    <property type="match status" value="1"/>
</dbReference>
<dbReference type="InterPro" id="IPR002589">
    <property type="entry name" value="Macro_dom"/>
</dbReference>
<dbReference type="InterPro" id="IPR043472">
    <property type="entry name" value="Macro_dom-like"/>
</dbReference>
<dbReference type="NCBIfam" id="NF001661">
    <property type="entry name" value="PRK00431.1-2"/>
    <property type="match status" value="1"/>
</dbReference>
<dbReference type="NCBIfam" id="NF001664">
    <property type="entry name" value="PRK00431.1-6"/>
    <property type="match status" value="1"/>
</dbReference>
<dbReference type="PANTHER" id="PTHR11106">
    <property type="entry name" value="GANGLIOSIDE INDUCED DIFFERENTIATION ASSOCIATED PROTEIN 2-RELATED"/>
    <property type="match status" value="1"/>
</dbReference>
<dbReference type="PANTHER" id="PTHR11106:SF27">
    <property type="entry name" value="MACRO DOMAIN-CONTAINING PROTEIN"/>
    <property type="match status" value="1"/>
</dbReference>
<dbReference type="Pfam" id="PF01661">
    <property type="entry name" value="Macro"/>
    <property type="match status" value="1"/>
</dbReference>
<dbReference type="SMART" id="SM00506">
    <property type="entry name" value="A1pp"/>
    <property type="match status" value="1"/>
</dbReference>
<dbReference type="SUPFAM" id="SSF52949">
    <property type="entry name" value="Macro domain-like"/>
    <property type="match status" value="1"/>
</dbReference>
<dbReference type="PROSITE" id="PS51154">
    <property type="entry name" value="MACRO"/>
    <property type="match status" value="1"/>
</dbReference>
<keyword id="KW-1185">Reference proteome</keyword>
<comment type="similarity">
    <text evidence="2">Belongs to the MacroD-type family.</text>
</comment>
<sequence length="179" mass="19815">MRIEVWQGDITQLDVDVIVNAANESLLGGGGVDGAIHRAAGPRLLEACEALPEVRPGVRCPTGEIRITDGFDLKARHIFHTVGPVWRDGKHNEPEQLANCYWQSLKLAEQMMLHSIAFPAISCGIYGYPLYQAARIAVTETRDWQRSHKVPKHIVLVAYNEATYKAYHQALATQETAAA</sequence>
<reference key="1">
    <citation type="journal article" date="2002" name="Nature">
        <title>Comparison of the genomes of two Xanthomonas pathogens with differing host specificities.</title>
        <authorList>
            <person name="da Silva A.C.R."/>
            <person name="Ferro J.A."/>
            <person name="Reinach F.C."/>
            <person name="Farah C.S."/>
            <person name="Furlan L.R."/>
            <person name="Quaggio R.B."/>
            <person name="Monteiro-Vitorello C.B."/>
            <person name="Van Sluys M.A."/>
            <person name="Almeida N.F. Jr."/>
            <person name="Alves L.M.C."/>
            <person name="do Amaral A.M."/>
            <person name="Bertolini M.C."/>
            <person name="Camargo L.E.A."/>
            <person name="Camarotte G."/>
            <person name="Cannavan F."/>
            <person name="Cardozo J."/>
            <person name="Chambergo F."/>
            <person name="Ciapina L.P."/>
            <person name="Cicarelli R.M.B."/>
            <person name="Coutinho L.L."/>
            <person name="Cursino-Santos J.R."/>
            <person name="El-Dorry H."/>
            <person name="Faria J.B."/>
            <person name="Ferreira A.J.S."/>
            <person name="Ferreira R.C.C."/>
            <person name="Ferro M.I.T."/>
            <person name="Formighieri E.F."/>
            <person name="Franco M.C."/>
            <person name="Greggio C.C."/>
            <person name="Gruber A."/>
            <person name="Katsuyama A.M."/>
            <person name="Kishi L.T."/>
            <person name="Leite R.P."/>
            <person name="Lemos E.G.M."/>
            <person name="Lemos M.V.F."/>
            <person name="Locali E.C."/>
            <person name="Machado M.A."/>
            <person name="Madeira A.M.B.N."/>
            <person name="Martinez-Rossi N.M."/>
            <person name="Martins E.C."/>
            <person name="Meidanis J."/>
            <person name="Menck C.F.M."/>
            <person name="Miyaki C.Y."/>
            <person name="Moon D.H."/>
            <person name="Moreira L.M."/>
            <person name="Novo M.T.M."/>
            <person name="Okura V.K."/>
            <person name="Oliveira M.C."/>
            <person name="Oliveira V.R."/>
            <person name="Pereira H.A."/>
            <person name="Rossi A."/>
            <person name="Sena J.A.D."/>
            <person name="Silva C."/>
            <person name="de Souza R.F."/>
            <person name="Spinola L.A.F."/>
            <person name="Takita M.A."/>
            <person name="Tamura R.E."/>
            <person name="Teixeira E.C."/>
            <person name="Tezza R.I.D."/>
            <person name="Trindade dos Santos M."/>
            <person name="Truffi D."/>
            <person name="Tsai S.M."/>
            <person name="White F.F."/>
            <person name="Setubal J.C."/>
            <person name="Kitajima J.P."/>
        </authorList>
    </citation>
    <scope>NUCLEOTIDE SEQUENCE [LARGE SCALE GENOMIC DNA]</scope>
    <source>
        <strain>ATCC 33913 / DSM 3586 / NCPPB 528 / LMG 568 / P 25</strain>
    </source>
</reference>
<gene>
    <name type="ordered locus">XCC3184</name>
</gene>
<proteinExistence type="inferred from homology"/>